<name>GPI10_CANGA</name>
<protein>
    <recommendedName>
        <fullName>GPI mannosyltransferase 3</fullName>
        <ecNumber>2.4.1.-</ecNumber>
    </recommendedName>
    <alternativeName>
        <fullName>GPI mannosyltransferase III</fullName>
        <shortName>GPI-MT-III</shortName>
    </alternativeName>
    <alternativeName>
        <fullName>Glycosylphosphatidylinositol-anchor biosynthesis protein 10</fullName>
    </alternativeName>
</protein>
<reference key="1">
    <citation type="journal article" date="2004" name="Nature">
        <title>Genome evolution in yeasts.</title>
        <authorList>
            <person name="Dujon B."/>
            <person name="Sherman D."/>
            <person name="Fischer G."/>
            <person name="Durrens P."/>
            <person name="Casaregola S."/>
            <person name="Lafontaine I."/>
            <person name="de Montigny J."/>
            <person name="Marck C."/>
            <person name="Neuveglise C."/>
            <person name="Talla E."/>
            <person name="Goffard N."/>
            <person name="Frangeul L."/>
            <person name="Aigle M."/>
            <person name="Anthouard V."/>
            <person name="Babour A."/>
            <person name="Barbe V."/>
            <person name="Barnay S."/>
            <person name="Blanchin S."/>
            <person name="Beckerich J.-M."/>
            <person name="Beyne E."/>
            <person name="Bleykasten C."/>
            <person name="Boisrame A."/>
            <person name="Boyer J."/>
            <person name="Cattolico L."/>
            <person name="Confanioleri F."/>
            <person name="de Daruvar A."/>
            <person name="Despons L."/>
            <person name="Fabre E."/>
            <person name="Fairhead C."/>
            <person name="Ferry-Dumazet H."/>
            <person name="Groppi A."/>
            <person name="Hantraye F."/>
            <person name="Hennequin C."/>
            <person name="Jauniaux N."/>
            <person name="Joyet P."/>
            <person name="Kachouri R."/>
            <person name="Kerrest A."/>
            <person name="Koszul R."/>
            <person name="Lemaire M."/>
            <person name="Lesur I."/>
            <person name="Ma L."/>
            <person name="Muller H."/>
            <person name="Nicaud J.-M."/>
            <person name="Nikolski M."/>
            <person name="Oztas S."/>
            <person name="Ozier-Kalogeropoulos O."/>
            <person name="Pellenz S."/>
            <person name="Potier S."/>
            <person name="Richard G.-F."/>
            <person name="Straub M.-L."/>
            <person name="Suleau A."/>
            <person name="Swennen D."/>
            <person name="Tekaia F."/>
            <person name="Wesolowski-Louvel M."/>
            <person name="Westhof E."/>
            <person name="Wirth B."/>
            <person name="Zeniou-Meyer M."/>
            <person name="Zivanovic Y."/>
            <person name="Bolotin-Fukuhara M."/>
            <person name="Thierry A."/>
            <person name="Bouchier C."/>
            <person name="Caudron B."/>
            <person name="Scarpelli C."/>
            <person name="Gaillardin C."/>
            <person name="Weissenbach J."/>
            <person name="Wincker P."/>
            <person name="Souciet J.-L."/>
        </authorList>
    </citation>
    <scope>NUCLEOTIDE SEQUENCE [LARGE SCALE GENOMIC DNA]</scope>
    <source>
        <strain>ATCC 2001 / BCRC 20586 / JCM 3761 / NBRC 0622 / NRRL Y-65 / CBS 138</strain>
    </source>
</reference>
<organism>
    <name type="scientific">Candida glabrata (strain ATCC 2001 / BCRC 20586 / JCM 3761 / NBRC 0622 / NRRL Y-65 / CBS 138)</name>
    <name type="common">Yeast</name>
    <name type="synonym">Nakaseomyces glabratus</name>
    <dbReference type="NCBI Taxonomy" id="284593"/>
    <lineage>
        <taxon>Eukaryota</taxon>
        <taxon>Fungi</taxon>
        <taxon>Dikarya</taxon>
        <taxon>Ascomycota</taxon>
        <taxon>Saccharomycotina</taxon>
        <taxon>Saccharomycetes</taxon>
        <taxon>Saccharomycetales</taxon>
        <taxon>Saccharomycetaceae</taxon>
        <taxon>Nakaseomyces</taxon>
    </lineage>
</organism>
<gene>
    <name type="primary">GPI10</name>
    <name type="ordered locus">CAGL0F07843g</name>
</gene>
<comment type="function">
    <text evidence="1">Mannosyltransferase involved in glycosylphosphatidylinositol-anchor biosynthesis. Transfers the third mannose to Man2-GlcN-acyl-PI during GPI precursor assembly (By similarity).</text>
</comment>
<comment type="pathway">
    <text>Glycolipid biosynthesis; glycosylphosphatidylinositol-anchor biosynthesis.</text>
</comment>
<comment type="subcellular location">
    <subcellularLocation>
        <location evidence="1">Endoplasmic reticulum membrane</location>
        <topology evidence="1">Multi-pass membrane protein</topology>
    </subcellularLocation>
</comment>
<comment type="similarity">
    <text evidence="3">Belongs to the glycosyltransferase 22 family. PIGB subfamily.</text>
</comment>
<accession>Q6FTY5</accession>
<sequence length="612" mass="71387">MVTNKKDTDENRDVQGSIVTKTSAIFPVLVGFRVINSLLTRTYFQADEFWQSLEPAHYKAFGYGELTWEWKVGLRSYAFPMLFEIIYRLVKLLAIASKEALSIICSIGAGLMLLCFPQSKLATEVARDLLTIPNEYSETVEYYGVIYAPKLFMALLAATGEYFTIKLIQKVYLKTVSKNDDQLPKLSNITKIALLLTLTNFFNCFFITRTFINSFEMILTSIALYNWDWSGGIEINTRSFTKSLFFAMFACIQRPSNAIIWIVLGFFLTINLLLRRDYTLIGRLYAKILVVFTITMLVNVVIDFYFYNQIIFPVFKFINFNFTSILSEFYGVAPWHFHLLQSLPIMLGYSLPLFIYGLFSNDSTTKNNIRFGALRQIKFVLILNIIFYSYLKHKEFRFIYPLQPLFCLLSALGALKLAGKVQNYRYLKEYVWIIPLMSMIVSIFITTFQESGVIQVMKDLHNEKDIDSVGFVMPCHSTPWQSYLHRNDIRQLWAISCEPPLHLLGKNNASIELQTYMDESDYLYENISGFIKKNFPKFTNSMDMENVNNNASMPQFPHEWPQFLIIFEQLDNEFMSRYLLDSGYVKYNKIFNSYSHWDSRRNGDLIIYYKNN</sequence>
<evidence type="ECO:0000250" key="1"/>
<evidence type="ECO:0000255" key="2"/>
<evidence type="ECO:0000305" key="3"/>
<dbReference type="EC" id="2.4.1.-"/>
<dbReference type="EMBL" id="CR380952">
    <property type="protein sequence ID" value="CAG59233.1"/>
    <property type="molecule type" value="Genomic_DNA"/>
</dbReference>
<dbReference type="RefSeq" id="XP_446309.1">
    <property type="nucleotide sequence ID" value="XM_446309.1"/>
</dbReference>
<dbReference type="FunCoup" id="Q6FTY5">
    <property type="interactions" value="913"/>
</dbReference>
<dbReference type="STRING" id="284593.Q6FTY5"/>
<dbReference type="CAZy" id="GT22">
    <property type="family name" value="Glycosyltransferase Family 22"/>
</dbReference>
<dbReference type="GlyCosmos" id="Q6FTY5">
    <property type="glycosylation" value="6 sites, No reported glycans"/>
</dbReference>
<dbReference type="EnsemblFungi" id="CAGL0F07843g-T">
    <property type="protein sequence ID" value="CAGL0F07843g-T-p1"/>
    <property type="gene ID" value="CAGL0F07843g"/>
</dbReference>
<dbReference type="KEGG" id="cgr:2887751"/>
<dbReference type="CGD" id="CAL0129444">
    <property type="gene designation" value="CAGL0F07843g"/>
</dbReference>
<dbReference type="VEuPathDB" id="FungiDB:CAGL0F07843g"/>
<dbReference type="eggNOG" id="KOG1771">
    <property type="taxonomic scope" value="Eukaryota"/>
</dbReference>
<dbReference type="HOGENOM" id="CLU_012353_2_0_1"/>
<dbReference type="InParanoid" id="Q6FTY5"/>
<dbReference type="OMA" id="HEWPDYL"/>
<dbReference type="UniPathway" id="UPA00196"/>
<dbReference type="Proteomes" id="UP000002428">
    <property type="component" value="Chromosome F"/>
</dbReference>
<dbReference type="GO" id="GO:0005789">
    <property type="term" value="C:endoplasmic reticulum membrane"/>
    <property type="evidence" value="ECO:0007669"/>
    <property type="project" value="UniProtKB-SubCell"/>
</dbReference>
<dbReference type="GO" id="GO:0000026">
    <property type="term" value="F:alpha-1,2-mannosyltransferase activity"/>
    <property type="evidence" value="ECO:0007669"/>
    <property type="project" value="EnsemblFungi"/>
</dbReference>
<dbReference type="GO" id="GO:0006506">
    <property type="term" value="P:GPI anchor biosynthetic process"/>
    <property type="evidence" value="ECO:0007669"/>
    <property type="project" value="UniProtKB-UniPathway"/>
</dbReference>
<dbReference type="InterPro" id="IPR005599">
    <property type="entry name" value="GPI_mannosylTrfase"/>
</dbReference>
<dbReference type="PANTHER" id="PTHR22760">
    <property type="entry name" value="GLYCOSYLTRANSFERASE"/>
    <property type="match status" value="1"/>
</dbReference>
<dbReference type="PANTHER" id="PTHR22760:SF4">
    <property type="entry name" value="GPI MANNOSYLTRANSFERASE 3"/>
    <property type="match status" value="1"/>
</dbReference>
<dbReference type="Pfam" id="PF03901">
    <property type="entry name" value="Glyco_transf_22"/>
    <property type="match status" value="1"/>
</dbReference>
<proteinExistence type="inferred from homology"/>
<keyword id="KW-0256">Endoplasmic reticulum</keyword>
<keyword id="KW-0325">Glycoprotein</keyword>
<keyword id="KW-0328">Glycosyltransferase</keyword>
<keyword id="KW-0337">GPI-anchor biosynthesis</keyword>
<keyword id="KW-0472">Membrane</keyword>
<keyword id="KW-1185">Reference proteome</keyword>
<keyword id="KW-0808">Transferase</keyword>
<keyword id="KW-0812">Transmembrane</keyword>
<keyword id="KW-1133">Transmembrane helix</keyword>
<feature type="chain" id="PRO_0000246261" description="GPI mannosyltransferase 3">
    <location>
        <begin position="1"/>
        <end position="612"/>
    </location>
</feature>
<feature type="transmembrane region" description="Helical" evidence="2">
    <location>
        <begin position="92"/>
        <end position="112"/>
    </location>
</feature>
<feature type="transmembrane region" description="Helical" evidence="2">
    <location>
        <begin position="145"/>
        <end position="165"/>
    </location>
</feature>
<feature type="transmembrane region" description="Helical" evidence="2">
    <location>
        <begin position="192"/>
        <end position="212"/>
    </location>
</feature>
<feature type="transmembrane region" description="Helical" evidence="2">
    <location>
        <begin position="254"/>
        <end position="274"/>
    </location>
</feature>
<feature type="transmembrane region" description="Helical" evidence="2">
    <location>
        <begin position="288"/>
        <end position="308"/>
    </location>
</feature>
<feature type="transmembrane region" description="Helical" evidence="2">
    <location>
        <begin position="339"/>
        <end position="359"/>
    </location>
</feature>
<feature type="transmembrane region" description="Helical" evidence="2">
    <location>
        <begin position="371"/>
        <end position="391"/>
    </location>
</feature>
<feature type="transmembrane region" description="Helical" evidence="2">
    <location>
        <begin position="398"/>
        <end position="418"/>
    </location>
</feature>
<feature type="transmembrane region" description="Helical" evidence="2">
    <location>
        <begin position="429"/>
        <end position="449"/>
    </location>
</feature>
<feature type="glycosylation site" description="N-linked (GlcNAc...) asparagine" evidence="2">
    <location>
        <position position="188"/>
    </location>
</feature>
<feature type="glycosylation site" description="N-linked (GlcNAc...) asparagine" evidence="2">
    <location>
        <position position="321"/>
    </location>
</feature>
<feature type="glycosylation site" description="N-linked (GlcNAc...) asparagine" evidence="2">
    <location>
        <position position="361"/>
    </location>
</feature>
<feature type="glycosylation site" description="N-linked (GlcNAc...) asparagine" evidence="2">
    <location>
        <position position="508"/>
    </location>
</feature>
<feature type="glycosylation site" description="N-linked (GlcNAc...) asparagine" evidence="2">
    <location>
        <position position="526"/>
    </location>
</feature>
<feature type="glycosylation site" description="N-linked (GlcNAc...) asparagine" evidence="2">
    <location>
        <position position="550"/>
    </location>
</feature>